<evidence type="ECO:0000255" key="1">
    <source>
        <dbReference type="HAMAP-Rule" id="MF_00152"/>
    </source>
</evidence>
<sequence>MKYIGAHVSAAGGLANAAIRAAEIDATAFALFTKNQRQWRAAPLTTQTIDEFKAACEKYHYTSAQILPHDSYLINLGHPVTEALEKSRDAFIDEMQRCEQLGLSLLNFHPGSHLMQISEEDCLARIAESINIALDKTQGVTAVIENTAGQGSNLGFKFEHLAAIIDGVEDKSRVGVCIDTCHAFAAGYDLRTPAECEKTFADFARIVGFKYLRGMHLNDAKSTFGSRVDRHHSLGEGNIGHDAFRWIMQDDRFDGIPLILETINPDIWAEEIAWLKAQQTEKAVA</sequence>
<feature type="chain" id="PRO_1000058174" description="Probable endonuclease 4">
    <location>
        <begin position="1"/>
        <end position="285"/>
    </location>
</feature>
<feature type="binding site" evidence="1">
    <location>
        <position position="69"/>
    </location>
    <ligand>
        <name>Zn(2+)</name>
        <dbReference type="ChEBI" id="CHEBI:29105"/>
        <label>1</label>
    </ligand>
</feature>
<feature type="binding site" evidence="1">
    <location>
        <position position="109"/>
    </location>
    <ligand>
        <name>Zn(2+)</name>
        <dbReference type="ChEBI" id="CHEBI:29105"/>
        <label>1</label>
    </ligand>
</feature>
<feature type="binding site" evidence="1">
    <location>
        <position position="145"/>
    </location>
    <ligand>
        <name>Zn(2+)</name>
        <dbReference type="ChEBI" id="CHEBI:29105"/>
        <label>1</label>
    </ligand>
</feature>
<feature type="binding site" evidence="1">
    <location>
        <position position="145"/>
    </location>
    <ligand>
        <name>Zn(2+)</name>
        <dbReference type="ChEBI" id="CHEBI:29105"/>
        <label>2</label>
    </ligand>
</feature>
<feature type="binding site" evidence="1">
    <location>
        <position position="179"/>
    </location>
    <ligand>
        <name>Zn(2+)</name>
        <dbReference type="ChEBI" id="CHEBI:29105"/>
        <label>2</label>
    </ligand>
</feature>
<feature type="binding site" evidence="1">
    <location>
        <position position="182"/>
    </location>
    <ligand>
        <name>Zn(2+)</name>
        <dbReference type="ChEBI" id="CHEBI:29105"/>
        <label>3</label>
    </ligand>
</feature>
<feature type="binding site" evidence="1">
    <location>
        <position position="216"/>
    </location>
    <ligand>
        <name>Zn(2+)</name>
        <dbReference type="ChEBI" id="CHEBI:29105"/>
        <label>2</label>
    </ligand>
</feature>
<feature type="binding site" evidence="1">
    <location>
        <position position="229"/>
    </location>
    <ligand>
        <name>Zn(2+)</name>
        <dbReference type="ChEBI" id="CHEBI:29105"/>
        <label>3</label>
    </ligand>
</feature>
<feature type="binding site" evidence="1">
    <location>
        <position position="231"/>
    </location>
    <ligand>
        <name>Zn(2+)</name>
        <dbReference type="ChEBI" id="CHEBI:29105"/>
        <label>3</label>
    </ligand>
</feature>
<feature type="binding site" evidence="1">
    <location>
        <position position="261"/>
    </location>
    <ligand>
        <name>Zn(2+)</name>
        <dbReference type="ChEBI" id="CHEBI:29105"/>
        <label>2</label>
    </ligand>
</feature>
<reference key="1">
    <citation type="journal article" date="2008" name="J. Bacteriol.">
        <title>The pangenome structure of Escherichia coli: comparative genomic analysis of E. coli commensal and pathogenic isolates.</title>
        <authorList>
            <person name="Rasko D.A."/>
            <person name="Rosovitz M.J."/>
            <person name="Myers G.S.A."/>
            <person name="Mongodin E.F."/>
            <person name="Fricke W.F."/>
            <person name="Gajer P."/>
            <person name="Crabtree J."/>
            <person name="Sebaihia M."/>
            <person name="Thomson N.R."/>
            <person name="Chaudhuri R."/>
            <person name="Henderson I.R."/>
            <person name="Sperandio V."/>
            <person name="Ravel J."/>
        </authorList>
    </citation>
    <scope>NUCLEOTIDE SEQUENCE [LARGE SCALE GENOMIC DNA]</scope>
    <source>
        <strain>E24377A / ETEC</strain>
    </source>
</reference>
<keyword id="KW-0227">DNA damage</keyword>
<keyword id="KW-0234">DNA repair</keyword>
<keyword id="KW-0255">Endonuclease</keyword>
<keyword id="KW-0378">Hydrolase</keyword>
<keyword id="KW-0479">Metal-binding</keyword>
<keyword id="KW-0540">Nuclease</keyword>
<keyword id="KW-1185">Reference proteome</keyword>
<keyword id="KW-0862">Zinc</keyword>
<dbReference type="EC" id="3.1.21.2" evidence="1"/>
<dbReference type="EMBL" id="CP000800">
    <property type="protein sequence ID" value="ABV20073.1"/>
    <property type="molecule type" value="Genomic_DNA"/>
</dbReference>
<dbReference type="RefSeq" id="WP_000873890.1">
    <property type="nucleotide sequence ID" value="NC_009801.1"/>
</dbReference>
<dbReference type="SMR" id="A7ZNY3"/>
<dbReference type="GeneID" id="93775023"/>
<dbReference type="KEGG" id="ecw:EcE24377A_2456"/>
<dbReference type="HOGENOM" id="CLU_025885_0_4_6"/>
<dbReference type="Proteomes" id="UP000001122">
    <property type="component" value="Chromosome"/>
</dbReference>
<dbReference type="GO" id="GO:0008833">
    <property type="term" value="F:deoxyribonuclease IV (phage-T4-induced) activity"/>
    <property type="evidence" value="ECO:0007669"/>
    <property type="project" value="UniProtKB-UniRule"/>
</dbReference>
<dbReference type="GO" id="GO:0003677">
    <property type="term" value="F:DNA binding"/>
    <property type="evidence" value="ECO:0007669"/>
    <property type="project" value="InterPro"/>
</dbReference>
<dbReference type="GO" id="GO:0003906">
    <property type="term" value="F:DNA-(apurinic or apyrimidinic site) endonuclease activity"/>
    <property type="evidence" value="ECO:0007669"/>
    <property type="project" value="TreeGrafter"/>
</dbReference>
<dbReference type="GO" id="GO:0008081">
    <property type="term" value="F:phosphoric diester hydrolase activity"/>
    <property type="evidence" value="ECO:0007669"/>
    <property type="project" value="TreeGrafter"/>
</dbReference>
<dbReference type="GO" id="GO:0008270">
    <property type="term" value="F:zinc ion binding"/>
    <property type="evidence" value="ECO:0007669"/>
    <property type="project" value="UniProtKB-UniRule"/>
</dbReference>
<dbReference type="GO" id="GO:0006284">
    <property type="term" value="P:base-excision repair"/>
    <property type="evidence" value="ECO:0007669"/>
    <property type="project" value="TreeGrafter"/>
</dbReference>
<dbReference type="CDD" id="cd00019">
    <property type="entry name" value="AP2Ec"/>
    <property type="match status" value="1"/>
</dbReference>
<dbReference type="FunFam" id="3.20.20.150:FF:000001">
    <property type="entry name" value="Probable endonuclease 4"/>
    <property type="match status" value="1"/>
</dbReference>
<dbReference type="Gene3D" id="3.20.20.150">
    <property type="entry name" value="Divalent-metal-dependent TIM barrel enzymes"/>
    <property type="match status" value="1"/>
</dbReference>
<dbReference type="HAMAP" id="MF_00152">
    <property type="entry name" value="Nfo"/>
    <property type="match status" value="1"/>
</dbReference>
<dbReference type="InterPro" id="IPR001719">
    <property type="entry name" value="AP_endonuc_2"/>
</dbReference>
<dbReference type="InterPro" id="IPR018246">
    <property type="entry name" value="AP_endonuc_F2_Zn_BS"/>
</dbReference>
<dbReference type="InterPro" id="IPR036237">
    <property type="entry name" value="Xyl_isomerase-like_sf"/>
</dbReference>
<dbReference type="InterPro" id="IPR013022">
    <property type="entry name" value="Xyl_isomerase-like_TIM-brl"/>
</dbReference>
<dbReference type="NCBIfam" id="TIGR00587">
    <property type="entry name" value="nfo"/>
    <property type="match status" value="1"/>
</dbReference>
<dbReference type="NCBIfam" id="NF002199">
    <property type="entry name" value="PRK01060.1-4"/>
    <property type="match status" value="1"/>
</dbReference>
<dbReference type="PANTHER" id="PTHR21445:SF0">
    <property type="entry name" value="APURINIC-APYRIMIDINIC ENDONUCLEASE"/>
    <property type="match status" value="1"/>
</dbReference>
<dbReference type="PANTHER" id="PTHR21445">
    <property type="entry name" value="ENDONUCLEASE IV ENDODEOXYRIBONUCLEASE IV"/>
    <property type="match status" value="1"/>
</dbReference>
<dbReference type="Pfam" id="PF01261">
    <property type="entry name" value="AP_endonuc_2"/>
    <property type="match status" value="1"/>
</dbReference>
<dbReference type="SMART" id="SM00518">
    <property type="entry name" value="AP2Ec"/>
    <property type="match status" value="1"/>
</dbReference>
<dbReference type="SUPFAM" id="SSF51658">
    <property type="entry name" value="Xylose isomerase-like"/>
    <property type="match status" value="1"/>
</dbReference>
<dbReference type="PROSITE" id="PS00729">
    <property type="entry name" value="AP_NUCLEASE_F2_1"/>
    <property type="match status" value="1"/>
</dbReference>
<dbReference type="PROSITE" id="PS00730">
    <property type="entry name" value="AP_NUCLEASE_F2_2"/>
    <property type="match status" value="1"/>
</dbReference>
<dbReference type="PROSITE" id="PS00731">
    <property type="entry name" value="AP_NUCLEASE_F2_3"/>
    <property type="match status" value="1"/>
</dbReference>
<dbReference type="PROSITE" id="PS51432">
    <property type="entry name" value="AP_NUCLEASE_F2_4"/>
    <property type="match status" value="1"/>
</dbReference>
<name>END4_ECO24</name>
<proteinExistence type="inferred from homology"/>
<accession>A7ZNY3</accession>
<gene>
    <name evidence="1" type="primary">nfo</name>
    <name type="ordered locus">EcE24377A_2456</name>
</gene>
<protein>
    <recommendedName>
        <fullName evidence="1">Probable endonuclease 4</fullName>
        <ecNumber evidence="1">3.1.21.2</ecNumber>
    </recommendedName>
    <alternativeName>
        <fullName evidence="1">Endodeoxyribonuclease IV</fullName>
    </alternativeName>
    <alternativeName>
        <fullName evidence="1">Endonuclease IV</fullName>
    </alternativeName>
</protein>
<comment type="function">
    <text evidence="1">Endonuclease IV plays a role in DNA repair. It cleaves phosphodiester bonds at apurinic or apyrimidinic (AP) sites, generating a 3'-hydroxyl group and a 5'-terminal sugar phosphate.</text>
</comment>
<comment type="catalytic activity">
    <reaction evidence="1">
        <text>Endonucleolytic cleavage to 5'-phosphooligonucleotide end-products.</text>
        <dbReference type="EC" id="3.1.21.2"/>
    </reaction>
</comment>
<comment type="cofactor">
    <cofactor evidence="1">
        <name>Zn(2+)</name>
        <dbReference type="ChEBI" id="CHEBI:29105"/>
    </cofactor>
    <text evidence="1">Binds 3 Zn(2+) ions.</text>
</comment>
<comment type="similarity">
    <text evidence="1">Belongs to the AP endonuclease 2 family.</text>
</comment>
<organism>
    <name type="scientific">Escherichia coli O139:H28 (strain E24377A / ETEC)</name>
    <dbReference type="NCBI Taxonomy" id="331111"/>
    <lineage>
        <taxon>Bacteria</taxon>
        <taxon>Pseudomonadati</taxon>
        <taxon>Pseudomonadota</taxon>
        <taxon>Gammaproteobacteria</taxon>
        <taxon>Enterobacterales</taxon>
        <taxon>Enterobacteriaceae</taxon>
        <taxon>Escherichia</taxon>
    </lineage>
</organism>